<protein>
    <recommendedName>
        <fullName evidence="1">HTH-type transcriptional repressor PurR</fullName>
    </recommendedName>
    <alternativeName>
        <fullName evidence="1">Pur regulon repressor</fullName>
    </alternativeName>
    <alternativeName>
        <fullName evidence="1">Purine nucleotide synthesis repressor</fullName>
    </alternativeName>
</protein>
<comment type="function">
    <text evidence="1">Is the main repressor of the genes involved in the de novo synthesis of purine nucleotides, regulating purB, purC, purEK, purF, purHD, purL, purMN and guaBA expression. PurR is allosterically activated to bind its cognate DNA by binding the purine corepressors, hypoxanthine or guanine, thereby effecting transcription repression.</text>
</comment>
<comment type="pathway">
    <text>Purine metabolism; purine nucleotide biosynthesis [regulation].</text>
</comment>
<comment type="subunit">
    <text evidence="1">Homodimer.</text>
</comment>
<comment type="domain">
    <text evidence="1">Consists of two structural and functional domains: an N-terminal DNA-binding domain, approximately the first 60 residues, and a larger C-terminal domain, approximately 280 residues, which imparts the function of corepressor binding and oligomerization.</text>
</comment>
<gene>
    <name evidence="1" type="primary">purR</name>
    <name type="ordered locus">APL_0819</name>
</gene>
<organism>
    <name type="scientific">Actinobacillus pleuropneumoniae serotype 5b (strain L20)</name>
    <dbReference type="NCBI Taxonomy" id="416269"/>
    <lineage>
        <taxon>Bacteria</taxon>
        <taxon>Pseudomonadati</taxon>
        <taxon>Pseudomonadota</taxon>
        <taxon>Gammaproteobacteria</taxon>
        <taxon>Pasteurellales</taxon>
        <taxon>Pasteurellaceae</taxon>
        <taxon>Actinobacillus</taxon>
    </lineage>
</organism>
<feature type="chain" id="PRO_1000085865" description="HTH-type transcriptional repressor PurR">
    <location>
        <begin position="1"/>
        <end position="336"/>
    </location>
</feature>
<feature type="domain" description="HTH lacI-type" evidence="1">
    <location>
        <begin position="2"/>
        <end position="56"/>
    </location>
</feature>
<feature type="DNA-binding region" description="H-T-H motif" evidence="1">
    <location>
        <begin position="4"/>
        <end position="23"/>
    </location>
</feature>
<feature type="DNA-binding region" evidence="1">
    <location>
        <begin position="48"/>
        <end position="56"/>
    </location>
</feature>
<feature type="binding site" evidence="1">
    <location>
        <position position="73"/>
    </location>
    <ligand>
        <name>hypoxanthine</name>
        <dbReference type="ChEBI" id="CHEBI:17368"/>
    </ligand>
</feature>
<feature type="binding site" evidence="1">
    <location>
        <position position="188"/>
    </location>
    <ligand>
        <name>hypoxanthine</name>
        <dbReference type="ChEBI" id="CHEBI:17368"/>
    </ligand>
</feature>
<feature type="binding site" evidence="1">
    <location>
        <position position="219"/>
    </location>
    <ligand>
        <name>hypoxanthine</name>
        <dbReference type="ChEBI" id="CHEBI:17368"/>
    </ligand>
</feature>
<feature type="binding site" evidence="1">
    <location>
        <position position="273"/>
    </location>
    <ligand>
        <name>hypoxanthine</name>
        <dbReference type="ChEBI" id="CHEBI:17368"/>
    </ligand>
</feature>
<proteinExistence type="inferred from homology"/>
<reference key="1">
    <citation type="journal article" date="2008" name="J. Bacteriol.">
        <title>The complete genome sequence of Actinobacillus pleuropneumoniae L20 (serotype 5b).</title>
        <authorList>
            <person name="Foote S.J."/>
            <person name="Bosse J.T."/>
            <person name="Bouevitch A.B."/>
            <person name="Langford P.R."/>
            <person name="Young N.M."/>
            <person name="Nash J.H.E."/>
        </authorList>
    </citation>
    <scope>NUCLEOTIDE SEQUENCE [LARGE SCALE GENOMIC DNA]</scope>
    <source>
        <strain>L20</strain>
    </source>
</reference>
<accession>A3N0H9</accession>
<name>PURR_ACTP2</name>
<sequence>MATIKDVAKLAGVSTTTVSHVINKTRFVAEDTSKAVWDAIQQLNYSPSAVARSLKVNTTKSIGMIITTSEAPYFAEIVLAVEEHCYQQGYSLFLCNTQNEPEKIQNHLDMLIKKRVDGVLVMCSEYTRDSLELFNGTNIPMVVMDWGKADDHSDRILDNSFEGGYLATQHLIENGHKDIGVIAGHLSKTLSKERYEGFLKAMHEANLPVRQEWIYEGDFEPESGFEQMNNLLRLEKLPTAIFCFSDTIALGAISALSEKGLSVPSYMSIIGYDNIHSSRFYSPPLTTIHQSKSRLGVKALNILLERIKIDKTQYQPQTIEFHPELVLRRSVRNLNK</sequence>
<evidence type="ECO:0000255" key="1">
    <source>
        <dbReference type="HAMAP-Rule" id="MF_01277"/>
    </source>
</evidence>
<keyword id="KW-0238">DNA-binding</keyword>
<keyword id="KW-0658">Purine biosynthesis</keyword>
<keyword id="KW-1185">Reference proteome</keyword>
<keyword id="KW-0678">Repressor</keyword>
<keyword id="KW-0804">Transcription</keyword>
<keyword id="KW-0805">Transcription regulation</keyword>
<dbReference type="EMBL" id="CP000569">
    <property type="protein sequence ID" value="ABN73915.1"/>
    <property type="molecule type" value="Genomic_DNA"/>
</dbReference>
<dbReference type="RefSeq" id="WP_005612138.1">
    <property type="nucleotide sequence ID" value="NC_009053.1"/>
</dbReference>
<dbReference type="SMR" id="A3N0H9"/>
<dbReference type="STRING" id="416269.APL_0819"/>
<dbReference type="EnsemblBacteria" id="ABN73915">
    <property type="protein sequence ID" value="ABN73915"/>
    <property type="gene ID" value="APL_0819"/>
</dbReference>
<dbReference type="KEGG" id="apl:APL_0819"/>
<dbReference type="eggNOG" id="COG1609">
    <property type="taxonomic scope" value="Bacteria"/>
</dbReference>
<dbReference type="HOGENOM" id="CLU_037628_6_2_6"/>
<dbReference type="UniPathway" id="UPA00488"/>
<dbReference type="Proteomes" id="UP000001432">
    <property type="component" value="Chromosome"/>
</dbReference>
<dbReference type="GO" id="GO:0003700">
    <property type="term" value="F:DNA-binding transcription factor activity"/>
    <property type="evidence" value="ECO:0007669"/>
    <property type="project" value="TreeGrafter"/>
</dbReference>
<dbReference type="GO" id="GO:0000976">
    <property type="term" value="F:transcription cis-regulatory region binding"/>
    <property type="evidence" value="ECO:0007669"/>
    <property type="project" value="TreeGrafter"/>
</dbReference>
<dbReference type="GO" id="GO:0045892">
    <property type="term" value="P:negative regulation of DNA-templated transcription"/>
    <property type="evidence" value="ECO:0007669"/>
    <property type="project" value="UniProtKB-UniRule"/>
</dbReference>
<dbReference type="GO" id="GO:0006164">
    <property type="term" value="P:purine nucleotide biosynthetic process"/>
    <property type="evidence" value="ECO:0007669"/>
    <property type="project" value="UniProtKB-UniPathway"/>
</dbReference>
<dbReference type="CDD" id="cd01392">
    <property type="entry name" value="HTH_LacI"/>
    <property type="match status" value="1"/>
</dbReference>
<dbReference type="CDD" id="cd06275">
    <property type="entry name" value="PBP1_PurR"/>
    <property type="match status" value="1"/>
</dbReference>
<dbReference type="FunFam" id="1.10.260.40:FF:000002">
    <property type="entry name" value="HTH-type transcriptional repressor PurR"/>
    <property type="match status" value="1"/>
</dbReference>
<dbReference type="Gene3D" id="3.40.50.2300">
    <property type="match status" value="2"/>
</dbReference>
<dbReference type="Gene3D" id="1.10.260.40">
    <property type="entry name" value="lambda repressor-like DNA-binding domains"/>
    <property type="match status" value="1"/>
</dbReference>
<dbReference type="HAMAP" id="MF_01277">
    <property type="entry name" value="HTH_type_PurR"/>
    <property type="match status" value="1"/>
</dbReference>
<dbReference type="InterPro" id="IPR000843">
    <property type="entry name" value="HTH_LacI"/>
</dbReference>
<dbReference type="InterPro" id="IPR010982">
    <property type="entry name" value="Lambda_DNA-bd_dom_sf"/>
</dbReference>
<dbReference type="InterPro" id="IPR001761">
    <property type="entry name" value="Peripla_BP/Lac1_sug-bd_dom"/>
</dbReference>
<dbReference type="InterPro" id="IPR028082">
    <property type="entry name" value="Peripla_BP_I"/>
</dbReference>
<dbReference type="InterPro" id="IPR023588">
    <property type="entry name" value="Tscrpt_reg_HTH_PurR"/>
</dbReference>
<dbReference type="NCBIfam" id="NF007979">
    <property type="entry name" value="PRK10703.1"/>
    <property type="match status" value="1"/>
</dbReference>
<dbReference type="PANTHER" id="PTHR30146:SF148">
    <property type="entry name" value="HTH-TYPE TRANSCRIPTIONAL REPRESSOR PURR-RELATED"/>
    <property type="match status" value="1"/>
</dbReference>
<dbReference type="PANTHER" id="PTHR30146">
    <property type="entry name" value="LACI-RELATED TRANSCRIPTIONAL REPRESSOR"/>
    <property type="match status" value="1"/>
</dbReference>
<dbReference type="Pfam" id="PF00356">
    <property type="entry name" value="LacI"/>
    <property type="match status" value="1"/>
</dbReference>
<dbReference type="Pfam" id="PF00532">
    <property type="entry name" value="Peripla_BP_1"/>
    <property type="match status" value="1"/>
</dbReference>
<dbReference type="PRINTS" id="PR00036">
    <property type="entry name" value="HTHLACI"/>
</dbReference>
<dbReference type="SMART" id="SM00354">
    <property type="entry name" value="HTH_LACI"/>
    <property type="match status" value="1"/>
</dbReference>
<dbReference type="SUPFAM" id="SSF47413">
    <property type="entry name" value="lambda repressor-like DNA-binding domains"/>
    <property type="match status" value="1"/>
</dbReference>
<dbReference type="SUPFAM" id="SSF53822">
    <property type="entry name" value="Periplasmic binding protein-like I"/>
    <property type="match status" value="1"/>
</dbReference>
<dbReference type="PROSITE" id="PS00356">
    <property type="entry name" value="HTH_LACI_1"/>
    <property type="match status" value="1"/>
</dbReference>
<dbReference type="PROSITE" id="PS50932">
    <property type="entry name" value="HTH_LACI_2"/>
    <property type="match status" value="1"/>
</dbReference>